<accession>Q09YK4</accession>
<organism>
    <name type="scientific">Ateles geoffroyi</name>
    <name type="common">Black-handed spider monkey</name>
    <name type="synonym">Geoffroy's spider monkey</name>
    <dbReference type="NCBI Taxonomy" id="9509"/>
    <lineage>
        <taxon>Eukaryota</taxon>
        <taxon>Metazoa</taxon>
        <taxon>Chordata</taxon>
        <taxon>Craniata</taxon>
        <taxon>Vertebrata</taxon>
        <taxon>Euteleostomi</taxon>
        <taxon>Mammalia</taxon>
        <taxon>Eutheria</taxon>
        <taxon>Euarchontoglires</taxon>
        <taxon>Primates</taxon>
        <taxon>Haplorrhini</taxon>
        <taxon>Platyrrhini</taxon>
        <taxon>Atelidae</taxon>
        <taxon>Atelinae</taxon>
        <taxon>Ateles</taxon>
    </lineage>
</organism>
<name>CTTB2_ATEGE</name>
<evidence type="ECO:0000250" key="1">
    <source>
        <dbReference type="UniProtKB" id="B9EJA2"/>
    </source>
</evidence>
<evidence type="ECO:0000250" key="2">
    <source>
        <dbReference type="UniProtKB" id="Q2IBD4"/>
    </source>
</evidence>
<evidence type="ECO:0000250" key="3">
    <source>
        <dbReference type="UniProtKB" id="Q8WZ74"/>
    </source>
</evidence>
<evidence type="ECO:0000255" key="4"/>
<evidence type="ECO:0000256" key="5">
    <source>
        <dbReference type="SAM" id="MobiDB-lite"/>
    </source>
</evidence>
<proteinExistence type="inferred from homology"/>
<protein>
    <recommendedName>
        <fullName>Cortactin-binding protein 2</fullName>
        <shortName>CortBP2</shortName>
    </recommendedName>
</protein>
<reference key="1">
    <citation type="submission" date="2006-09" db="EMBL/GenBank/DDBJ databases">
        <title>NISC comparative sequencing initiative.</title>
        <authorList>
            <person name="Antonellis A."/>
            <person name="Ayele K."/>
            <person name="Benjamin B."/>
            <person name="Blakesley R.W."/>
            <person name="Boakye A."/>
            <person name="Bouffard G.G."/>
            <person name="Brinkley C."/>
            <person name="Brooks S."/>
            <person name="Chu G."/>
            <person name="Coleman H."/>
            <person name="Engle J."/>
            <person name="Gestole M."/>
            <person name="Greene A."/>
            <person name="Guan X."/>
            <person name="Gupta J."/>
            <person name="Haghighi P."/>
            <person name="Han J."/>
            <person name="Hansen N."/>
            <person name="Ho S.-L."/>
            <person name="Hu P."/>
            <person name="Hunter G."/>
            <person name="Hurle B."/>
            <person name="Idol J.R."/>
            <person name="Kwong P."/>
            <person name="Laric P."/>
            <person name="Larson S."/>
            <person name="Lee-Lin S.-Q."/>
            <person name="Legaspi R."/>
            <person name="Madden M."/>
            <person name="Maduro Q.L."/>
            <person name="Maduro V.B."/>
            <person name="Margulies E.H."/>
            <person name="Masiello C."/>
            <person name="Maskeri B."/>
            <person name="McDowell J."/>
            <person name="Mojidi H.A."/>
            <person name="Mullikin J.C."/>
            <person name="Oestreicher J.S."/>
            <person name="Park M."/>
            <person name="Portnoy M.E."/>
            <person name="Prasad A."/>
            <person name="Puri O."/>
            <person name="Reddix-Dugue N."/>
            <person name="Schandler K."/>
            <person name="Schueler M.G."/>
            <person name="Sison C."/>
            <person name="Stantripop S."/>
            <person name="Stephen E."/>
            <person name="Taye A."/>
            <person name="Thomas J.W."/>
            <person name="Thomas P.J."/>
            <person name="Tsipouri V."/>
            <person name="Ung L."/>
            <person name="Vogt J.L."/>
            <person name="Wetherby K.D."/>
            <person name="Young A."/>
            <person name="Green E.D."/>
        </authorList>
    </citation>
    <scope>NUCLEOTIDE SEQUENCE [LARGE SCALE GENOMIC DNA]</scope>
</reference>
<sequence length="1660" mass="180725">MATDGASCEPDLSRAPEDAAGATAEAAKKEFDVDTLSKSELRMLLSVMEGELEARDLVIEALRARRKEVFIQERYGRFNLNDPFLALQRDYEAGAGDKEKKPVCTNPLSILEAVMAHCRKMQERMSAQLAAAESRQKKLEMEKLQLQALEQEHKKLAARLEEERGKNKQVVLMLVKECKQLSGKVIEEAQKLEDVMAKLEEEKKKTNELEEELSAEKRRSTEMEAQMEKQLSEFDTEREQLRAKLNREEAHTTDLKEEIDKMKKMIEQLKRGSDSKPSLSLPRKTKDRRLVSISVGTEGTVTRSVACQTDLVTESADHVKKLPLTTPVKPSTGSPLASANAKGSVCTSAAMARPGIDRQASHGDLIGVSVPAFPPSSANRIEENGPSTGSTPDPTSSTPPLPSNAAPPTAQTPGITPQNSQAPPMHSLHSPCANASLHPGLNPRIQAARFRFQGNANDPDQNGNTTQSPPSRDVSPTSRDNLVAKQLARNTVTQALSRFTGPQAGAPPRPGAPPTADVGTHPSVGRTSVKTHGVARVDRGNPPPIPPKKPGLSQTPSPPHPQLKVLIDSSRASNTGAKGDNKTVASPPSSLPQGNRVINEENLSKSSSPQLPPKPSIDLTVAPAGCAVSALATSQVGAWPAATPGLNQPACSDSSLVIPTTIAFCSSINPVSASSCRPGASDSLLVTASGWSPSLTPLLMSGGPAPLAGRPTLLQQAAAQGNVTLLSMLLNEEGLDINYSCEDGHSALYSAAKNGHTDCVRLLLSAEAQVNAADKNGFTPLCAAAAQGHFECVELLVAYDAHINHAADGGQTPLYLACKNGNKECIKLLLEAGADRSVKTTDGWTSVHAAVDTGNVDSLKLLMYHRVPAHGNSFSEEESESGVFDLDGEEESPEGKSKPVVTADLINHANREGWTAAHIAASKGFKNCLEILCRHGGLETERRDKCNRTAHDVATDDCKHLLENLNALKIPLRILVDEVEPSNYGSDDFECENTICALNIRKQTSWDDFSKAVSQALTNHFQAISSDGWWSLEDVTCNNTTDSNIGLSARSIRSITLGNVPWSVGQSFAQSPWDFMMKNKAEHITVLLSGPQEGCLSSVTYASMIPLQMMQNYLRLVEQYHNVIFHGPEGSLQDYIVHQLALCLKHRQMAAGFSCEIVRAEVDASFSKKQLLDLFISSACLIPVKQSPVKKKIIIILENLEKSSLSELLRDFLAPLENRSTESPCTFQKGNGMSECYYFHENCFLMGTIAKACLQGSDLLVQQHFRWVQLRWDGEPMQGLLQRFLRRKVVNKFRGQVPPPCDPVCKIVDWALSVWRQLNSCLARLGTPEALLGPKYFLSCPVVPGHAQVTVKWMSKLWNGVITPRVQEAILSRASVKRQPGFGQTTAKRHPSQGQQAVVKAALSILLNKAVLHGCPLPRAELAQHTADFKGGSFPLSIVSSYNSCSKKKGESGSWRKVNTSPRRKSGRFSLPTWNKPDLSTEGIKNKTLSQLNCNRNASLSKQKSLENDVSLTLNLDQSLFLGSDDEADLVKELQSMCSSKSESDISKIADSRDDLRTFDSSGNNPVFLATINNLRMPVSQKEVCPLSSHQTTECSNSKSKTELDVSRVKSFLPVPRSKVTQCSQNTKSSSSNTRQIEINNSKEENWNFHKNEHLEKPNK</sequence>
<dbReference type="EMBL" id="DP000177">
    <property type="protein sequence ID" value="ABI75276.1"/>
    <property type="molecule type" value="Genomic_DNA"/>
</dbReference>
<dbReference type="SMR" id="Q09YK4"/>
<dbReference type="GO" id="GO:0015629">
    <property type="term" value="C:actin cytoskeleton"/>
    <property type="evidence" value="ECO:0007669"/>
    <property type="project" value="TreeGrafter"/>
</dbReference>
<dbReference type="GO" id="GO:0005938">
    <property type="term" value="C:cell cortex"/>
    <property type="evidence" value="ECO:0007669"/>
    <property type="project" value="UniProtKB-SubCell"/>
</dbReference>
<dbReference type="GO" id="GO:0043197">
    <property type="term" value="C:dendritic spine"/>
    <property type="evidence" value="ECO:0000250"/>
    <property type="project" value="UniProtKB"/>
</dbReference>
<dbReference type="GO" id="GO:0090443">
    <property type="term" value="C:FAR/SIN/STRIPAK complex"/>
    <property type="evidence" value="ECO:0000250"/>
    <property type="project" value="UniProtKB"/>
</dbReference>
<dbReference type="GO" id="GO:0051721">
    <property type="term" value="F:protein phosphatase 2A binding"/>
    <property type="evidence" value="ECO:0007669"/>
    <property type="project" value="TreeGrafter"/>
</dbReference>
<dbReference type="Gene3D" id="1.25.40.20">
    <property type="entry name" value="Ankyrin repeat-containing domain"/>
    <property type="match status" value="1"/>
</dbReference>
<dbReference type="InterPro" id="IPR002110">
    <property type="entry name" value="Ankyrin_rpt"/>
</dbReference>
<dbReference type="InterPro" id="IPR036770">
    <property type="entry name" value="Ankyrin_rpt-contain_sf"/>
</dbReference>
<dbReference type="InterPro" id="IPR050719">
    <property type="entry name" value="Cortactin-Actin_Reg"/>
</dbReference>
<dbReference type="InterPro" id="IPR019131">
    <property type="entry name" value="Cortactin-binding_p2_N"/>
</dbReference>
<dbReference type="PANTHER" id="PTHR23166:SF9">
    <property type="entry name" value="CTTNBP2 N-TERMINAL-LIKE PROTEIN"/>
    <property type="match status" value="1"/>
</dbReference>
<dbReference type="PANTHER" id="PTHR23166">
    <property type="entry name" value="FILAMIN/GPBP-INTERACTING PROTEIN"/>
    <property type="match status" value="1"/>
</dbReference>
<dbReference type="Pfam" id="PF25408">
    <property type="entry name" value="AAA_lid_NAV1"/>
    <property type="match status" value="1"/>
</dbReference>
<dbReference type="Pfam" id="PF12796">
    <property type="entry name" value="Ank_2"/>
    <property type="match status" value="2"/>
</dbReference>
<dbReference type="Pfam" id="PF09727">
    <property type="entry name" value="CortBP2"/>
    <property type="match status" value="1"/>
</dbReference>
<dbReference type="SMART" id="SM00248">
    <property type="entry name" value="ANK"/>
    <property type="match status" value="6"/>
</dbReference>
<dbReference type="SUPFAM" id="SSF48403">
    <property type="entry name" value="Ankyrin repeat"/>
    <property type="match status" value="1"/>
</dbReference>
<dbReference type="PROSITE" id="PS50297">
    <property type="entry name" value="ANK_REP_REGION"/>
    <property type="match status" value="1"/>
</dbReference>
<dbReference type="PROSITE" id="PS50088">
    <property type="entry name" value="ANK_REPEAT"/>
    <property type="match status" value="3"/>
</dbReference>
<comment type="function">
    <text evidence="2">Regulates the dendritic spine distribution of CTTN/cortactin in hippocampal neurons, and thus controls dendritic spinogenesis and dendritic spine maintenance. Associates with the striatin-interacting phosphatase and kinase (STRIPAK) core complex to regulate dendritic spine distribution of the STRIPAK complex in hippocampal neurons.</text>
</comment>
<comment type="subunit">
    <text evidence="2">Interacts with CTTN/cortactin SH3 domain. Interacts with STRN, STRN4/zinedin and MOB4/phocein; this interactions mediate the association with the STRIPAK core complex and may regulate dendritic spine distribution of the STRIPAK complex in hippocampal neurons. Activation of glutamate receptors weakens the interaction with STRN and STRN4.</text>
</comment>
<comment type="subcellular location">
    <subcellularLocation>
        <location evidence="1">Cytoplasm</location>
        <location evidence="1">Cell cortex</location>
    </subcellularLocation>
    <subcellularLocation>
        <location evidence="2">Cell projection</location>
        <location evidence="2">Dendritic spine</location>
    </subcellularLocation>
    <text evidence="2">Remains associated with dendritic spines even after glutamate stimulation.</text>
</comment>
<keyword id="KW-0040">ANK repeat</keyword>
<keyword id="KW-0966">Cell projection</keyword>
<keyword id="KW-0175">Coiled coil</keyword>
<keyword id="KW-0963">Cytoplasm</keyword>
<keyword id="KW-0488">Methylation</keyword>
<keyword id="KW-0597">Phosphoprotein</keyword>
<keyword id="KW-0677">Repeat</keyword>
<keyword id="KW-0770">Synapse</keyword>
<feature type="chain" id="PRO_0000260401" description="Cortactin-binding protein 2">
    <location>
        <begin position="1"/>
        <end position="1660"/>
    </location>
</feature>
<feature type="repeat" description="ANK 1">
    <location>
        <begin position="709"/>
        <end position="739"/>
    </location>
</feature>
<feature type="repeat" description="ANK 2">
    <location>
        <begin position="743"/>
        <end position="772"/>
    </location>
</feature>
<feature type="repeat" description="ANK 3">
    <location>
        <begin position="776"/>
        <end position="805"/>
    </location>
</feature>
<feature type="repeat" description="ANK 4">
    <location>
        <begin position="809"/>
        <end position="838"/>
    </location>
</feature>
<feature type="repeat" description="ANK 5">
    <location>
        <begin position="842"/>
        <end position="871"/>
    </location>
</feature>
<feature type="repeat" description="ANK 6">
    <location>
        <begin position="912"/>
        <end position="942"/>
    </location>
</feature>
<feature type="region of interest" description="Disordered" evidence="5">
    <location>
        <begin position="1"/>
        <end position="26"/>
    </location>
</feature>
<feature type="region of interest" description="Disordered" evidence="5">
    <location>
        <begin position="203"/>
        <end position="222"/>
    </location>
</feature>
<feature type="region of interest" description="Disordered" evidence="5">
    <location>
        <begin position="366"/>
        <end position="440"/>
    </location>
</feature>
<feature type="region of interest" description="Disordered" evidence="5">
    <location>
        <begin position="454"/>
        <end position="478"/>
    </location>
</feature>
<feature type="region of interest" description="Disordered" evidence="5">
    <location>
        <begin position="499"/>
        <end position="596"/>
    </location>
</feature>
<feature type="region of interest" description="Disordered" evidence="5">
    <location>
        <begin position="872"/>
        <end position="897"/>
    </location>
</feature>
<feature type="region of interest" description="Disordered" evidence="5">
    <location>
        <begin position="1445"/>
        <end position="1477"/>
    </location>
</feature>
<feature type="region of interest" description="Disordered" evidence="5">
    <location>
        <begin position="1617"/>
        <end position="1660"/>
    </location>
</feature>
<feature type="coiled-coil region" evidence="4">
    <location>
        <begin position="119"/>
        <end position="276"/>
    </location>
</feature>
<feature type="compositionally biased region" description="Low complexity" evidence="5">
    <location>
        <begin position="386"/>
        <end position="396"/>
    </location>
</feature>
<feature type="compositionally biased region" description="Polar residues" evidence="5">
    <location>
        <begin position="411"/>
        <end position="422"/>
    </location>
</feature>
<feature type="compositionally biased region" description="Polar residues" evidence="5">
    <location>
        <begin position="583"/>
        <end position="593"/>
    </location>
</feature>
<feature type="compositionally biased region" description="Acidic residues" evidence="5">
    <location>
        <begin position="875"/>
        <end position="892"/>
    </location>
</feature>
<feature type="compositionally biased region" description="Polar residues" evidence="5">
    <location>
        <begin position="1619"/>
        <end position="1640"/>
    </location>
</feature>
<feature type="compositionally biased region" description="Basic and acidic residues" evidence="5">
    <location>
        <begin position="1641"/>
        <end position="1660"/>
    </location>
</feature>
<feature type="modified residue" description="Asymmetric dimethylarginine" evidence="1">
    <location>
        <position position="498"/>
    </location>
</feature>
<feature type="modified residue" description="Phosphoserine" evidence="3">
    <location>
        <position position="1524"/>
    </location>
</feature>
<gene>
    <name type="primary">CTTNBP2</name>
    <name type="synonym">CORTBP2</name>
</gene>